<dbReference type="EMBL" id="BC088283">
    <property type="protein sequence ID" value="AAH88283.1"/>
    <property type="molecule type" value="mRNA"/>
</dbReference>
<dbReference type="RefSeq" id="NP_001009705.1">
    <property type="nucleotide sequence ID" value="NM_001009705.1"/>
</dbReference>
<dbReference type="SMR" id="Q5I0I4"/>
<dbReference type="FunCoup" id="Q5I0I4">
    <property type="interactions" value="976"/>
</dbReference>
<dbReference type="STRING" id="10116.ENSRNOP00000027960"/>
<dbReference type="PhosphoSitePlus" id="Q5I0I4"/>
<dbReference type="PaxDb" id="10116-ENSRNOP00000027960"/>
<dbReference type="Ensembl" id="ENSRNOT00000027960.7">
    <property type="protein sequence ID" value="ENSRNOP00000027960.5"/>
    <property type="gene ID" value="ENSRNOG00000020596.8"/>
</dbReference>
<dbReference type="GeneID" id="361520"/>
<dbReference type="KEGG" id="rno:361520"/>
<dbReference type="UCSC" id="RGD:1549698">
    <property type="organism name" value="rat"/>
</dbReference>
<dbReference type="AGR" id="RGD:1549698"/>
<dbReference type="CTD" id="55101"/>
<dbReference type="RGD" id="1549698">
    <property type="gene designation" value="Dmac2"/>
</dbReference>
<dbReference type="eggNOG" id="KOG3864">
    <property type="taxonomic scope" value="Eukaryota"/>
</dbReference>
<dbReference type="GeneTree" id="ENSGT00940000160500"/>
<dbReference type="HOGENOM" id="CLU_072474_0_0_1"/>
<dbReference type="InParanoid" id="Q5I0I4"/>
<dbReference type="OMA" id="GFRFAGQ"/>
<dbReference type="OrthoDB" id="5859291at2759"/>
<dbReference type="PhylomeDB" id="Q5I0I4"/>
<dbReference type="TreeFam" id="TF315274"/>
<dbReference type="Reactome" id="R-RNO-6799198">
    <property type="pathway name" value="Complex I biogenesis"/>
</dbReference>
<dbReference type="PRO" id="PR:Q5I0I4"/>
<dbReference type="Proteomes" id="UP000002494">
    <property type="component" value="Chromosome 1"/>
</dbReference>
<dbReference type="Bgee" id="ENSRNOG00000020596">
    <property type="expression patterns" value="Expressed in heart and 19 other cell types or tissues"/>
</dbReference>
<dbReference type="GO" id="GO:0005739">
    <property type="term" value="C:mitochondrion"/>
    <property type="evidence" value="ECO:0007669"/>
    <property type="project" value="UniProtKB-SubCell"/>
</dbReference>
<dbReference type="GO" id="GO:0019005">
    <property type="term" value="C:SCF ubiquitin ligase complex"/>
    <property type="evidence" value="ECO:0000318"/>
    <property type="project" value="GO_Central"/>
</dbReference>
<dbReference type="GO" id="GO:0032981">
    <property type="term" value="P:mitochondrial respiratory chain complex I assembly"/>
    <property type="evidence" value="ECO:0000250"/>
    <property type="project" value="UniProtKB"/>
</dbReference>
<dbReference type="GO" id="GO:0031146">
    <property type="term" value="P:SCF-dependent proteasomal ubiquitin-dependent protein catabolic process"/>
    <property type="evidence" value="ECO:0000318"/>
    <property type="project" value="GO_Central"/>
</dbReference>
<dbReference type="FunFam" id="3.80.10.10:FF:000168">
    <property type="entry name" value="Distal membrane arm assembly complex 2"/>
    <property type="match status" value="1"/>
</dbReference>
<dbReference type="Gene3D" id="3.80.10.10">
    <property type="entry name" value="Ribonuclease Inhibitor"/>
    <property type="match status" value="1"/>
</dbReference>
<dbReference type="InterPro" id="IPR032675">
    <property type="entry name" value="LRR_dom_sf"/>
</dbReference>
<dbReference type="SUPFAM" id="SSF52047">
    <property type="entry name" value="RNI-like"/>
    <property type="match status" value="1"/>
</dbReference>
<name>DMAC2_RAT</name>
<proteinExistence type="evidence at transcript level"/>
<reference key="1">
    <citation type="journal article" date="2004" name="Genome Res.">
        <title>The status, quality, and expansion of the NIH full-length cDNA project: the Mammalian Gene Collection (MGC).</title>
        <authorList>
            <consortium name="The MGC Project Team"/>
        </authorList>
    </citation>
    <scope>NUCLEOTIDE SEQUENCE [LARGE SCALE MRNA]</scope>
    <source>
        <tissue>Thymus</tissue>
    </source>
</reference>
<gene>
    <name evidence="2" type="primary">Dmac2</name>
    <name evidence="4" type="synonym">Atp5sl</name>
</gene>
<sequence>MAAPRAFLHLGAREWHGRARGTHSMSGLATPDSNREKKRTLLQFLSDHFHDVQTLREYLLQKQISKVSMENRSYRKIQERYGPYITGAQFILKQGGAVKFQGRDWIRPNDRGHSIAELQKVPVEAVDASGCAINYQGLSNLLPLKELQFLSLQRCPNLDDWCLSRLYLLAGSLQELSLAGCPRISERGLACLHHLQNLRRLDISDLPAVSHPGLTQILVEEMLPHCEVLGVDWAKSLKLGPDDQPPDTSSPLSS</sequence>
<organism>
    <name type="scientific">Rattus norvegicus</name>
    <name type="common">Rat</name>
    <dbReference type="NCBI Taxonomy" id="10116"/>
    <lineage>
        <taxon>Eukaryota</taxon>
        <taxon>Metazoa</taxon>
        <taxon>Chordata</taxon>
        <taxon>Craniata</taxon>
        <taxon>Vertebrata</taxon>
        <taxon>Euteleostomi</taxon>
        <taxon>Mammalia</taxon>
        <taxon>Eutheria</taxon>
        <taxon>Euarchontoglires</taxon>
        <taxon>Glires</taxon>
        <taxon>Rodentia</taxon>
        <taxon>Myomorpha</taxon>
        <taxon>Muroidea</taxon>
        <taxon>Muridae</taxon>
        <taxon>Murinae</taxon>
        <taxon>Rattus</taxon>
    </lineage>
</organism>
<comment type="function">
    <text evidence="2">Required for the assembly of the mitochondrial NADH:ubiquinone oxidoreductase complex (complex I). Involved in the assembly of the distal region of complex I.</text>
</comment>
<comment type="subunit">
    <text evidence="2">Interacts with incompletely assembled mitochondrial NADH:ubiquinone oxidoreductase complex (complex I).</text>
</comment>
<comment type="subcellular location">
    <subcellularLocation>
        <location evidence="1">Mitochondrion</location>
    </subcellularLocation>
</comment>
<comment type="similarity">
    <text evidence="3">Belongs to the ATP synthase subunit s family.</text>
</comment>
<evidence type="ECO:0000250" key="1">
    <source>
        <dbReference type="UniProtKB" id="Q9D7K5"/>
    </source>
</evidence>
<evidence type="ECO:0000250" key="2">
    <source>
        <dbReference type="UniProtKB" id="Q9NW81"/>
    </source>
</evidence>
<evidence type="ECO:0000305" key="3"/>
<evidence type="ECO:0000312" key="4">
    <source>
        <dbReference type="RGD" id="1549698"/>
    </source>
</evidence>
<protein>
    <recommendedName>
        <fullName evidence="2">Distal membrane-arm assembly complex protein 2</fullName>
    </recommendedName>
    <alternativeName>
        <fullName evidence="2">ATP synthase subunit s-like protein</fullName>
    </alternativeName>
</protein>
<keyword id="KW-0496">Mitochondrion</keyword>
<keyword id="KW-0597">Phosphoprotein</keyword>
<keyword id="KW-1185">Reference proteome</keyword>
<feature type="chain" id="PRO_0000318698" description="Distal membrane-arm assembly complex protein 2">
    <location>
        <begin position="1"/>
        <end position="254"/>
    </location>
</feature>
<feature type="modified residue" description="Phosphoserine" evidence="2">
    <location>
        <position position="250"/>
    </location>
</feature>
<accession>Q5I0I4</accession>